<comment type="function">
    <text evidence="1">Erythropoietin is the principal hormone involved in the regulation of erythrocyte differentiation and the maintenance of a physiological level of circulating erythrocyte mass.</text>
</comment>
<comment type="subcellular location">
    <subcellularLocation>
        <location evidence="1">Secreted</location>
    </subcellularLocation>
</comment>
<comment type="similarity">
    <text evidence="3">Belongs to the EPO/TPO family.</text>
</comment>
<comment type="sequence caution" evidence="3">
    <conflict type="erroneous initiation">
        <sequence resource="EMBL-CDS" id="AAR25698"/>
    </conflict>
</comment>
<feature type="signal peptide" evidence="2">
    <location>
        <begin position="1"/>
        <end position="20"/>
    </location>
</feature>
<feature type="chain" id="PRO_0000313668" description="Erythropoietin">
    <location>
        <begin position="21"/>
        <end position="180"/>
    </location>
</feature>
<feature type="glycosylation site" description="N-linked (GlcNAc...) asparagine" evidence="2">
    <location>
        <position position="75"/>
    </location>
</feature>
<feature type="disulfide bond" evidence="1">
    <location>
        <begin position="27"/>
        <end position="175"/>
    </location>
</feature>
<feature type="disulfide bond" evidence="1">
    <location>
        <begin position="49"/>
        <end position="53"/>
    </location>
</feature>
<reference key="1">
    <citation type="submission" date="2003-08" db="EMBL/GenBank/DDBJ databases">
        <authorList>
            <person name="Lutfalla G."/>
        </authorList>
    </citation>
    <scope>NUCLEOTIDE SEQUENCE [MRNA]</scope>
</reference>
<reference key="2">
    <citation type="journal article" date="2004" name="Nature">
        <title>Genome duplication in the teleost fish Tetraodon nigroviridis reveals the early vertebrate proto-karyotype.</title>
        <authorList>
            <person name="Jaillon O."/>
            <person name="Aury J.-M."/>
            <person name="Brunet F."/>
            <person name="Petit J.-L."/>
            <person name="Stange-Thomann N."/>
            <person name="Mauceli E."/>
            <person name="Bouneau L."/>
            <person name="Fischer C."/>
            <person name="Ozouf-Costaz C."/>
            <person name="Bernot A."/>
            <person name="Nicaud S."/>
            <person name="Jaffe D."/>
            <person name="Fisher S."/>
            <person name="Lutfalla G."/>
            <person name="Dossat C."/>
            <person name="Segurens B."/>
            <person name="Dasilva C."/>
            <person name="Salanoubat M."/>
            <person name="Levy M."/>
            <person name="Boudet N."/>
            <person name="Castellano S."/>
            <person name="Anthouard V."/>
            <person name="Jubin C."/>
            <person name="Castelli V."/>
            <person name="Katinka M."/>
            <person name="Vacherie B."/>
            <person name="Biemont C."/>
            <person name="Skalli Z."/>
            <person name="Cattolico L."/>
            <person name="Poulain J."/>
            <person name="De Berardinis V."/>
            <person name="Cruaud C."/>
            <person name="Duprat S."/>
            <person name="Brottier P."/>
            <person name="Coutanceau J.-P."/>
            <person name="Gouzy J."/>
            <person name="Parra G."/>
            <person name="Lardier G."/>
            <person name="Chapple C."/>
            <person name="McKernan K.J."/>
            <person name="McEwan P."/>
            <person name="Bosak S."/>
            <person name="Kellis M."/>
            <person name="Volff J.-N."/>
            <person name="Guigo R."/>
            <person name="Zody M.C."/>
            <person name="Mesirov J."/>
            <person name="Lindblad-Toh K."/>
            <person name="Birren B."/>
            <person name="Nusbaum C."/>
            <person name="Kahn D."/>
            <person name="Robinson-Rechavi M."/>
            <person name="Laudet V."/>
            <person name="Schachter V."/>
            <person name="Quetier F."/>
            <person name="Saurin W."/>
            <person name="Scarpelli C."/>
            <person name="Wincker P."/>
            <person name="Lander E.S."/>
            <person name="Weissenbach J."/>
            <person name="Roest Crollius H."/>
        </authorList>
    </citation>
    <scope>NUCLEOTIDE SEQUENCE [LARGE SCALE GENOMIC DNA]</scope>
</reference>
<dbReference type="EMBL" id="AY374507">
    <property type="protein sequence ID" value="AAR25698.1"/>
    <property type="status" value="ALT_INIT"/>
    <property type="molecule type" value="mRNA"/>
</dbReference>
<dbReference type="EMBL" id="CAAE01009425">
    <property type="protein sequence ID" value="CAF91978.1"/>
    <property type="molecule type" value="Genomic_DNA"/>
</dbReference>
<dbReference type="SMR" id="Q4T554"/>
<dbReference type="FunCoup" id="Q4T554">
    <property type="interactions" value="516"/>
</dbReference>
<dbReference type="STRING" id="99883.ENSTNIP00000004178"/>
<dbReference type="GlyCosmos" id="Q4T554">
    <property type="glycosylation" value="1 site, No reported glycans"/>
</dbReference>
<dbReference type="KEGG" id="tng:GSTEN00006991G001"/>
<dbReference type="InParanoid" id="Q4T554"/>
<dbReference type="OrthoDB" id="9892121at2759"/>
<dbReference type="TreeFam" id="TF333413"/>
<dbReference type="Proteomes" id="UP000007303">
    <property type="component" value="Unassembled WGS sequence"/>
</dbReference>
<dbReference type="GO" id="GO:0005615">
    <property type="term" value="C:extracellular space"/>
    <property type="evidence" value="ECO:0007669"/>
    <property type="project" value="TreeGrafter"/>
</dbReference>
<dbReference type="GO" id="GO:0005125">
    <property type="term" value="F:cytokine activity"/>
    <property type="evidence" value="ECO:0007669"/>
    <property type="project" value="TreeGrafter"/>
</dbReference>
<dbReference type="GO" id="GO:0005128">
    <property type="term" value="F:erythropoietin receptor binding"/>
    <property type="evidence" value="ECO:0007669"/>
    <property type="project" value="InterPro"/>
</dbReference>
<dbReference type="GO" id="GO:0005179">
    <property type="term" value="F:hormone activity"/>
    <property type="evidence" value="ECO:0007669"/>
    <property type="project" value="UniProtKB-KW"/>
</dbReference>
<dbReference type="GO" id="GO:0043249">
    <property type="term" value="P:erythrocyte maturation"/>
    <property type="evidence" value="ECO:0007669"/>
    <property type="project" value="UniProtKB-KW"/>
</dbReference>
<dbReference type="GO" id="GO:0048823">
    <property type="term" value="P:nucleate erythrocyte development"/>
    <property type="evidence" value="ECO:0007669"/>
    <property type="project" value="TreeGrafter"/>
</dbReference>
<dbReference type="Gene3D" id="1.20.1250.10">
    <property type="match status" value="1"/>
</dbReference>
<dbReference type="InterPro" id="IPR009079">
    <property type="entry name" value="4_helix_cytokine-like_core"/>
</dbReference>
<dbReference type="InterPro" id="IPR001323">
    <property type="entry name" value="EPO_TPO"/>
</dbReference>
<dbReference type="InterPro" id="IPR003013">
    <property type="entry name" value="Erythroptn"/>
</dbReference>
<dbReference type="PANTHER" id="PTHR10370">
    <property type="entry name" value="ERYTHROPOIETIN"/>
    <property type="match status" value="1"/>
</dbReference>
<dbReference type="PANTHER" id="PTHR10370:SF0">
    <property type="entry name" value="ERYTHROPOIETIN"/>
    <property type="match status" value="1"/>
</dbReference>
<dbReference type="Pfam" id="PF00758">
    <property type="entry name" value="EPO_TPO"/>
    <property type="match status" value="1"/>
</dbReference>
<dbReference type="PIRSF" id="PIRSF001951">
    <property type="entry name" value="EPO"/>
    <property type="match status" value="1"/>
</dbReference>
<dbReference type="PRINTS" id="PR00272">
    <property type="entry name" value="ERYTHROPTN"/>
</dbReference>
<dbReference type="SUPFAM" id="SSF47266">
    <property type="entry name" value="4-helical cytokines"/>
    <property type="match status" value="1"/>
</dbReference>
<protein>
    <recommendedName>
        <fullName>Erythropoietin</fullName>
    </recommendedName>
</protein>
<organism>
    <name type="scientific">Tetraodon nigroviridis</name>
    <name type="common">Spotted green pufferfish</name>
    <name type="synonym">Chelonodon nigroviridis</name>
    <dbReference type="NCBI Taxonomy" id="99883"/>
    <lineage>
        <taxon>Eukaryota</taxon>
        <taxon>Metazoa</taxon>
        <taxon>Chordata</taxon>
        <taxon>Craniata</taxon>
        <taxon>Vertebrata</taxon>
        <taxon>Euteleostomi</taxon>
        <taxon>Actinopterygii</taxon>
        <taxon>Neopterygii</taxon>
        <taxon>Teleostei</taxon>
        <taxon>Neoteleostei</taxon>
        <taxon>Acanthomorphata</taxon>
        <taxon>Eupercaria</taxon>
        <taxon>Tetraodontiformes</taxon>
        <taxon>Tetradontoidea</taxon>
        <taxon>Tetraodontidae</taxon>
        <taxon>Tetraodon</taxon>
    </lineage>
</organism>
<gene>
    <name type="primary">epo</name>
    <name type="ORF">GSTENG00006991001</name>
</gene>
<keyword id="KW-1015">Disulfide bond</keyword>
<keyword id="KW-0265">Erythrocyte maturation</keyword>
<keyword id="KW-0325">Glycoprotein</keyword>
<keyword id="KW-0372">Hormone</keyword>
<keyword id="KW-1185">Reference proteome</keyword>
<keyword id="KW-0964">Secreted</keyword>
<keyword id="KW-0732">Signal</keyword>
<evidence type="ECO:0000250" key="1"/>
<evidence type="ECO:0000255" key="2"/>
<evidence type="ECO:0000305" key="3"/>
<accession>Q4T554</accession>
<accession>Q6UAM1</accession>
<sequence>MTGLLAFLLIVLEWTRPSLPSPLRPICDLRVLNHFIKEAQDAEAAMKTCREGCTLSESVVVPQTTVDFDVWEKKNASAKAEEVQSGLWLLQQAFNFLRTSVTNAALHSHIDNAVRNLLSVNAVLRSLNIQEFTPQANGAEIEGTWRASSAAELLQVYVNFLRGKARLLLLDAQACQQDVS</sequence>
<name>EPO_TETNG</name>
<proteinExistence type="evidence at transcript level"/>